<keyword id="KW-0030">Aminoacyl-tRNA synthetase</keyword>
<keyword id="KW-0067">ATP-binding</keyword>
<keyword id="KW-0963">Cytoplasm</keyword>
<keyword id="KW-0436">Ligase</keyword>
<keyword id="KW-0547">Nucleotide-binding</keyword>
<keyword id="KW-0648">Protein biosynthesis</keyword>
<keyword id="KW-1185">Reference proteome</keyword>
<name>SYE2_RHORT</name>
<feature type="chain" id="PRO_0000237395" description="Glutamate--tRNA ligase 2">
    <location>
        <begin position="1"/>
        <end position="468"/>
    </location>
</feature>
<feature type="short sequence motif" description="'HIGH' region" evidence="1">
    <location>
        <begin position="9"/>
        <end position="19"/>
    </location>
</feature>
<feature type="short sequence motif" description="'KMSKS' region" evidence="1">
    <location>
        <begin position="238"/>
        <end position="242"/>
    </location>
</feature>
<feature type="binding site" evidence="1">
    <location>
        <position position="241"/>
    </location>
    <ligand>
        <name>ATP</name>
        <dbReference type="ChEBI" id="CHEBI:30616"/>
    </ligand>
</feature>
<protein>
    <recommendedName>
        <fullName evidence="1">Glutamate--tRNA ligase 2</fullName>
        <ecNumber evidence="1">6.1.1.17</ecNumber>
    </recommendedName>
    <alternativeName>
        <fullName evidence="1">Glutamyl-tRNA synthetase 2</fullName>
        <shortName evidence="1">GluRS 2</shortName>
    </alternativeName>
</protein>
<reference key="1">
    <citation type="journal article" date="2011" name="Stand. Genomic Sci.">
        <title>Complete genome sequence of Rhodospirillum rubrum type strain (S1).</title>
        <authorList>
            <person name="Munk A.C."/>
            <person name="Copeland A."/>
            <person name="Lucas S."/>
            <person name="Lapidus A."/>
            <person name="Del Rio T.G."/>
            <person name="Barry K."/>
            <person name="Detter J.C."/>
            <person name="Hammon N."/>
            <person name="Israni S."/>
            <person name="Pitluck S."/>
            <person name="Brettin T."/>
            <person name="Bruce D."/>
            <person name="Han C."/>
            <person name="Tapia R."/>
            <person name="Gilna P."/>
            <person name="Schmutz J."/>
            <person name="Larimer F."/>
            <person name="Land M."/>
            <person name="Kyrpides N.C."/>
            <person name="Mavromatis K."/>
            <person name="Richardson P."/>
            <person name="Rohde M."/>
            <person name="Goeker M."/>
            <person name="Klenk H.P."/>
            <person name="Zhang Y."/>
            <person name="Roberts G.P."/>
            <person name="Reslewic S."/>
            <person name="Schwartz D.C."/>
        </authorList>
    </citation>
    <scope>NUCLEOTIDE SEQUENCE [LARGE SCALE GENOMIC DNA]</scope>
    <source>
        <strain>ATCC 11170 / ATH 1.1.1 / DSM 467 / LMG 4362 / NCIMB 8255 / S1</strain>
    </source>
</reference>
<proteinExistence type="inferred from homology"/>
<sequence length="468" mass="51709">MTVVTRFAPSPTGFLHIGGARTALFNWLFARHHGGRFLLRIEDTDRVRSTPEAVAAIFDGLEWLGLDWDEEPTFQFARAARHAEAAHELVAKGLAYRCYCTPDELTAMREEQKAKGLPPRYNGLWRDRDPSEAPAGVAPVIRLKAPQDGETTITDSVQGAVTVANNQLDDMILLRSDGTPTYMLSVVVDDHDMGVTHVIRGDDHLTNAFRQTQLYWALGWETPVFAHIPLIHGADGAKLSKRHGALGAEAYRDMGFLPEALRNYLVRLGWAHGDDEVFTTEQAVEWFSLESIGRSPSRFDMQKLTALNGSYMRETDDDRLTALLVPRLESTLGLDIPAAGHALLRAGMAGLKERAKTLVELADLAAFYVRPRPLAIDAKAEKALDDEGRTILAALIDKLDDFSPWTRDSLENLARVMSEERGVKLGKVAQPIRAALTGSTVSPPIFEVMEILGPDETLGRLRDAQSHS</sequence>
<organism>
    <name type="scientific">Rhodospirillum rubrum (strain ATCC 11170 / ATH 1.1.1 / DSM 467 / LMG 4362 / NCIMB 8255 / S1)</name>
    <dbReference type="NCBI Taxonomy" id="269796"/>
    <lineage>
        <taxon>Bacteria</taxon>
        <taxon>Pseudomonadati</taxon>
        <taxon>Pseudomonadota</taxon>
        <taxon>Alphaproteobacteria</taxon>
        <taxon>Rhodospirillales</taxon>
        <taxon>Rhodospirillaceae</taxon>
        <taxon>Rhodospirillum</taxon>
    </lineage>
</organism>
<comment type="function">
    <text evidence="1">Catalyzes the attachment of glutamate to tRNA(Glu) in a two-step reaction: glutamate is first activated by ATP to form Glu-AMP and then transferred to the acceptor end of tRNA(Glu).</text>
</comment>
<comment type="catalytic activity">
    <reaction evidence="1">
        <text>tRNA(Glu) + L-glutamate + ATP = L-glutamyl-tRNA(Glu) + AMP + diphosphate</text>
        <dbReference type="Rhea" id="RHEA:23540"/>
        <dbReference type="Rhea" id="RHEA-COMP:9663"/>
        <dbReference type="Rhea" id="RHEA-COMP:9680"/>
        <dbReference type="ChEBI" id="CHEBI:29985"/>
        <dbReference type="ChEBI" id="CHEBI:30616"/>
        <dbReference type="ChEBI" id="CHEBI:33019"/>
        <dbReference type="ChEBI" id="CHEBI:78442"/>
        <dbReference type="ChEBI" id="CHEBI:78520"/>
        <dbReference type="ChEBI" id="CHEBI:456215"/>
        <dbReference type="EC" id="6.1.1.17"/>
    </reaction>
</comment>
<comment type="subunit">
    <text evidence="1">Monomer.</text>
</comment>
<comment type="subcellular location">
    <subcellularLocation>
        <location evidence="1">Cytoplasm</location>
    </subcellularLocation>
</comment>
<comment type="similarity">
    <text evidence="1">Belongs to the class-I aminoacyl-tRNA synthetase family. Glutamate--tRNA ligase type 1 subfamily.</text>
</comment>
<evidence type="ECO:0000255" key="1">
    <source>
        <dbReference type="HAMAP-Rule" id="MF_00022"/>
    </source>
</evidence>
<gene>
    <name evidence="1" type="primary">gltX2</name>
    <name type="ordered locus">Rru_A1601</name>
</gene>
<dbReference type="EC" id="6.1.1.17" evidence="1"/>
<dbReference type="EMBL" id="CP000230">
    <property type="protein sequence ID" value="ABC22401.1"/>
    <property type="molecule type" value="Genomic_DNA"/>
</dbReference>
<dbReference type="RefSeq" id="YP_426688.1">
    <property type="nucleotide sequence ID" value="NC_007643.1"/>
</dbReference>
<dbReference type="SMR" id="Q2RTZ4"/>
<dbReference type="STRING" id="269796.Rru_A1601"/>
<dbReference type="EnsemblBacteria" id="ABC22401">
    <property type="protein sequence ID" value="ABC22401"/>
    <property type="gene ID" value="Rru_A1601"/>
</dbReference>
<dbReference type="KEGG" id="rru:Rru_A1601"/>
<dbReference type="PATRIC" id="fig|269796.9.peg.1675"/>
<dbReference type="eggNOG" id="COG0008">
    <property type="taxonomic scope" value="Bacteria"/>
</dbReference>
<dbReference type="HOGENOM" id="CLU_015768_6_0_5"/>
<dbReference type="PhylomeDB" id="Q2RTZ4"/>
<dbReference type="Proteomes" id="UP000001929">
    <property type="component" value="Chromosome"/>
</dbReference>
<dbReference type="GO" id="GO:0005829">
    <property type="term" value="C:cytosol"/>
    <property type="evidence" value="ECO:0007669"/>
    <property type="project" value="TreeGrafter"/>
</dbReference>
<dbReference type="GO" id="GO:0005524">
    <property type="term" value="F:ATP binding"/>
    <property type="evidence" value="ECO:0007669"/>
    <property type="project" value="UniProtKB-UniRule"/>
</dbReference>
<dbReference type="GO" id="GO:0004818">
    <property type="term" value="F:glutamate-tRNA ligase activity"/>
    <property type="evidence" value="ECO:0007669"/>
    <property type="project" value="UniProtKB-UniRule"/>
</dbReference>
<dbReference type="GO" id="GO:0000049">
    <property type="term" value="F:tRNA binding"/>
    <property type="evidence" value="ECO:0007669"/>
    <property type="project" value="InterPro"/>
</dbReference>
<dbReference type="GO" id="GO:0008270">
    <property type="term" value="F:zinc ion binding"/>
    <property type="evidence" value="ECO:0007669"/>
    <property type="project" value="InterPro"/>
</dbReference>
<dbReference type="GO" id="GO:0006424">
    <property type="term" value="P:glutamyl-tRNA aminoacylation"/>
    <property type="evidence" value="ECO:0007669"/>
    <property type="project" value="UniProtKB-UniRule"/>
</dbReference>
<dbReference type="CDD" id="cd00808">
    <property type="entry name" value="GluRS_core"/>
    <property type="match status" value="1"/>
</dbReference>
<dbReference type="FunFam" id="3.40.50.620:FF:000007">
    <property type="entry name" value="Glutamate--tRNA ligase"/>
    <property type="match status" value="1"/>
</dbReference>
<dbReference type="Gene3D" id="1.10.10.350">
    <property type="match status" value="1"/>
</dbReference>
<dbReference type="Gene3D" id="3.40.50.620">
    <property type="entry name" value="HUPs"/>
    <property type="match status" value="1"/>
</dbReference>
<dbReference type="HAMAP" id="MF_00022">
    <property type="entry name" value="Glu_tRNA_synth_type1"/>
    <property type="match status" value="1"/>
</dbReference>
<dbReference type="InterPro" id="IPR045462">
    <property type="entry name" value="aa-tRNA-synth_I_cd-bd"/>
</dbReference>
<dbReference type="InterPro" id="IPR020751">
    <property type="entry name" value="aa-tRNA-synth_I_codon-bd_sub2"/>
</dbReference>
<dbReference type="InterPro" id="IPR001412">
    <property type="entry name" value="aa-tRNA-synth_I_CS"/>
</dbReference>
<dbReference type="InterPro" id="IPR008925">
    <property type="entry name" value="aa_tRNA-synth_I_cd-bd_sf"/>
</dbReference>
<dbReference type="InterPro" id="IPR004527">
    <property type="entry name" value="Glu-tRNA-ligase_bac/mito"/>
</dbReference>
<dbReference type="InterPro" id="IPR000924">
    <property type="entry name" value="Glu/Gln-tRNA-synth"/>
</dbReference>
<dbReference type="InterPro" id="IPR020058">
    <property type="entry name" value="Glu/Gln-tRNA-synth_Ib_cat-dom"/>
</dbReference>
<dbReference type="InterPro" id="IPR049940">
    <property type="entry name" value="GluQ/Sye"/>
</dbReference>
<dbReference type="InterPro" id="IPR033910">
    <property type="entry name" value="GluRS_core"/>
</dbReference>
<dbReference type="InterPro" id="IPR014729">
    <property type="entry name" value="Rossmann-like_a/b/a_fold"/>
</dbReference>
<dbReference type="NCBIfam" id="TIGR00464">
    <property type="entry name" value="gltX_bact"/>
    <property type="match status" value="1"/>
</dbReference>
<dbReference type="PANTHER" id="PTHR43311">
    <property type="entry name" value="GLUTAMATE--TRNA LIGASE"/>
    <property type="match status" value="1"/>
</dbReference>
<dbReference type="PANTHER" id="PTHR43311:SF2">
    <property type="entry name" value="GLUTAMATE--TRNA LIGASE, MITOCHONDRIAL-RELATED"/>
    <property type="match status" value="1"/>
</dbReference>
<dbReference type="Pfam" id="PF19269">
    <property type="entry name" value="Anticodon_2"/>
    <property type="match status" value="1"/>
</dbReference>
<dbReference type="Pfam" id="PF00749">
    <property type="entry name" value="tRNA-synt_1c"/>
    <property type="match status" value="1"/>
</dbReference>
<dbReference type="PRINTS" id="PR00987">
    <property type="entry name" value="TRNASYNTHGLU"/>
</dbReference>
<dbReference type="SUPFAM" id="SSF48163">
    <property type="entry name" value="An anticodon-binding domain of class I aminoacyl-tRNA synthetases"/>
    <property type="match status" value="1"/>
</dbReference>
<dbReference type="SUPFAM" id="SSF52374">
    <property type="entry name" value="Nucleotidylyl transferase"/>
    <property type="match status" value="1"/>
</dbReference>
<dbReference type="PROSITE" id="PS00178">
    <property type="entry name" value="AA_TRNA_LIGASE_I"/>
    <property type="match status" value="1"/>
</dbReference>
<accession>Q2RTZ4</accession>